<sequence>MESVERKSESSYLGMRNMQPEQRLSLDPPRLRSTPQDELHDLLCVGFGPASLAIAIALHDALDPRLNKSASNIHAQPKICFLERQKQFAWHSGMLVPGSKMQISFIKDLATLRDPRSSFTFLNYLHQKGRLIHFTNLSTFLPARLEFEDYMRWCAQQFSDVVAYGEEVVEVIPGKSDPSSSVVDFFTVRSRNVETGEISARRTRKVVIAIGGTAKMPSGLPQDPRIIHSSKYCTTLPALLKDKSKPYNIAVLGSGQSAAEIFHDLQKRYPNSRTTLIMRDSAMRPSDDSPFVNEIFNPERVDKFYSQSAAERQRSLLADKATNYSVVRLELIEEIYNDMYLQRVKNPDETQWQHRILPERKITRVEHHGPQSRMRIHLKSSKPESEGAANDVKETLEVDALMVATGYNRNAHERLLSKVQHLRPTGQDQWKPHRDYRVEMDPSKVSSEAGIWLQGCNERTHGLSDSLLSVLAVRGGEMVQSIFGEQLERAAVQGHQLRAML</sequence>
<gene>
    <name evidence="12" type="primary">sidA</name>
    <name type="ORF">Afu2g07680</name>
</gene>
<feature type="chain" id="PRO_0000431070" description="L-ornithine N(5)-monooxygenase">
    <location>
        <begin position="1"/>
        <end position="501"/>
    </location>
</feature>
<feature type="region of interest" description="Disordered" evidence="2">
    <location>
        <begin position="1"/>
        <end position="31"/>
    </location>
</feature>
<feature type="region of interest" description="Disordered" evidence="2">
    <location>
        <begin position="366"/>
        <end position="390"/>
    </location>
</feature>
<feature type="compositionally biased region" description="Basic and acidic residues" evidence="2">
    <location>
        <begin position="381"/>
        <end position="390"/>
    </location>
</feature>
<feature type="binding site" evidence="11">
    <location>
        <begin position="83"/>
        <end position="91"/>
    </location>
    <ligand>
        <name>FAD</name>
        <dbReference type="ChEBI" id="CHEBI:57692"/>
    </ligand>
</feature>
<feature type="binding site" evidence="11">
    <location>
        <position position="102"/>
    </location>
    <ligand>
        <name>FAD</name>
        <dbReference type="ChEBI" id="CHEBI:57692"/>
    </ligand>
</feature>
<feature type="binding site" evidence="11">
    <location>
        <position position="107"/>
    </location>
    <ligand>
        <name>substrate</name>
    </ligand>
</feature>
<feature type="binding site" evidence="11">
    <location>
        <position position="168"/>
    </location>
    <ligand>
        <name>FAD</name>
        <dbReference type="ChEBI" id="CHEBI:57692"/>
    </ligand>
</feature>
<feature type="binding site" evidence="11">
    <location>
        <begin position="254"/>
        <end position="257"/>
    </location>
    <ligand>
        <name>NADP(+)</name>
        <dbReference type="ChEBI" id="CHEBI:58349"/>
    </ligand>
</feature>
<feature type="binding site" evidence="11">
    <location>
        <position position="279"/>
    </location>
    <ligand>
        <name>NADP(+)</name>
        <dbReference type="ChEBI" id="CHEBI:58349"/>
    </ligand>
</feature>
<feature type="binding site" evidence="11">
    <location>
        <begin position="293"/>
        <end position="296"/>
    </location>
    <ligand>
        <name>substrate</name>
    </ligand>
</feature>
<feature type="binding site" evidence="11">
    <location>
        <begin position="323"/>
        <end position="325"/>
    </location>
    <ligand>
        <name>NADP(+)</name>
        <dbReference type="ChEBI" id="CHEBI:58349"/>
    </ligand>
</feature>
<feature type="binding site" evidence="11">
    <location>
        <position position="323"/>
    </location>
    <ligand>
        <name>substrate</name>
    </ligand>
</feature>
<feature type="binding site" evidence="11">
    <location>
        <begin position="466"/>
        <end position="468"/>
    </location>
    <ligand>
        <name>FAD</name>
        <dbReference type="ChEBI" id="CHEBI:57692"/>
    </ligand>
</feature>
<feature type="binding site" evidence="11">
    <location>
        <position position="469"/>
    </location>
    <ligand>
        <name>substrate</name>
    </ligand>
</feature>
<feature type="strand" evidence="15">
    <location>
        <begin position="40"/>
        <end position="45"/>
    </location>
</feature>
<feature type="helix" evidence="15">
    <location>
        <begin position="49"/>
        <end position="62"/>
    </location>
</feature>
<feature type="turn" evidence="15">
    <location>
        <begin position="64"/>
        <end position="66"/>
    </location>
</feature>
<feature type="helix" evidence="18">
    <location>
        <begin position="68"/>
        <end position="70"/>
    </location>
</feature>
<feature type="strand" evidence="15">
    <location>
        <begin position="79"/>
        <end position="87"/>
    </location>
</feature>
<feature type="helix" evidence="15">
    <location>
        <begin position="92"/>
        <end position="94"/>
    </location>
</feature>
<feature type="helix" evidence="15">
    <location>
        <begin position="105"/>
        <end position="107"/>
    </location>
</feature>
<feature type="strand" evidence="15">
    <location>
        <begin position="108"/>
        <end position="110"/>
    </location>
</feature>
<feature type="turn" evidence="15">
    <location>
        <begin position="111"/>
        <end position="113"/>
    </location>
</feature>
<feature type="helix" evidence="15">
    <location>
        <begin position="121"/>
        <end position="128"/>
    </location>
</feature>
<feature type="helix" evidence="15">
    <location>
        <begin position="131"/>
        <end position="135"/>
    </location>
</feature>
<feature type="helix" evidence="15">
    <location>
        <begin position="144"/>
        <end position="156"/>
    </location>
</feature>
<feature type="helix" evidence="15">
    <location>
        <begin position="157"/>
        <end position="161"/>
    </location>
</feature>
<feature type="strand" evidence="15">
    <location>
        <begin position="162"/>
        <end position="174"/>
    </location>
</feature>
<feature type="strand" evidence="15">
    <location>
        <begin position="185"/>
        <end position="192"/>
    </location>
</feature>
<feature type="turn" evidence="15">
    <location>
        <begin position="193"/>
        <end position="195"/>
    </location>
</feature>
<feature type="strand" evidence="15">
    <location>
        <begin position="198"/>
        <end position="208"/>
    </location>
</feature>
<feature type="strand" evidence="16">
    <location>
        <begin position="218"/>
        <end position="220"/>
    </location>
</feature>
<feature type="strand" evidence="15">
    <location>
        <begin position="226"/>
        <end position="228"/>
    </location>
</feature>
<feature type="helix" evidence="15">
    <location>
        <begin position="229"/>
        <end position="231"/>
    </location>
</feature>
<feature type="helix" evidence="15">
    <location>
        <begin position="232"/>
        <end position="239"/>
    </location>
</feature>
<feature type="strand" evidence="15">
    <location>
        <begin position="248"/>
        <end position="252"/>
    </location>
</feature>
<feature type="helix" evidence="15">
    <location>
        <begin position="256"/>
        <end position="268"/>
    </location>
</feature>
<feature type="strand" evidence="15">
    <location>
        <begin position="273"/>
        <end position="277"/>
    </location>
</feature>
<feature type="strand" evidence="15">
    <location>
        <begin position="279"/>
        <end position="282"/>
    </location>
</feature>
<feature type="helix" evidence="15">
    <location>
        <begin position="292"/>
        <end position="296"/>
    </location>
</feature>
<feature type="helix" evidence="15">
    <location>
        <begin position="300"/>
        <end position="305"/>
    </location>
</feature>
<feature type="helix" evidence="15">
    <location>
        <begin position="309"/>
        <end position="318"/>
    </location>
</feature>
<feature type="helix" evidence="15">
    <location>
        <begin position="320"/>
        <end position="322"/>
    </location>
</feature>
<feature type="turn" evidence="17">
    <location>
        <begin position="323"/>
        <end position="325"/>
    </location>
</feature>
<feature type="helix" evidence="15">
    <location>
        <begin position="329"/>
        <end position="345"/>
    </location>
</feature>
<feature type="helix" evidence="15">
    <location>
        <begin position="349"/>
        <end position="351"/>
    </location>
</feature>
<feature type="strand" evidence="15">
    <location>
        <begin position="353"/>
        <end position="357"/>
    </location>
</feature>
<feature type="strand" evidence="15">
    <location>
        <begin position="359"/>
        <end position="366"/>
    </location>
</feature>
<feature type="strand" evidence="15">
    <location>
        <begin position="369"/>
        <end position="372"/>
    </location>
</feature>
<feature type="strand" evidence="15">
    <location>
        <begin position="374"/>
        <end position="381"/>
    </location>
</feature>
<feature type="strand" evidence="15">
    <location>
        <begin position="395"/>
        <end position="403"/>
    </location>
</feature>
<feature type="helix" evidence="15">
    <location>
        <begin position="412"/>
        <end position="415"/>
    </location>
</feature>
<feature type="helix" evidence="15">
    <location>
        <begin position="417"/>
        <end position="422"/>
    </location>
</feature>
<feature type="strand" evidence="15">
    <location>
        <begin position="436"/>
        <end position="438"/>
    </location>
</feature>
<feature type="turn" evidence="15">
    <location>
        <begin position="442"/>
        <end position="444"/>
    </location>
</feature>
<feature type="strand" evidence="15">
    <location>
        <begin position="450"/>
        <end position="453"/>
    </location>
</feature>
<feature type="helix" evidence="15">
    <location>
        <begin position="458"/>
        <end position="461"/>
    </location>
</feature>
<feature type="turn" evidence="15">
    <location>
        <begin position="463"/>
        <end position="466"/>
    </location>
</feature>
<feature type="helix" evidence="15">
    <location>
        <begin position="471"/>
        <end position="490"/>
    </location>
</feature>
<organism>
    <name type="scientific">Aspergillus fumigatus (strain ATCC MYA-4609 / CBS 101355 / FGSC A1100 / Af293)</name>
    <name type="common">Neosartorya fumigata</name>
    <dbReference type="NCBI Taxonomy" id="330879"/>
    <lineage>
        <taxon>Eukaryota</taxon>
        <taxon>Fungi</taxon>
        <taxon>Dikarya</taxon>
        <taxon>Ascomycota</taxon>
        <taxon>Pezizomycotina</taxon>
        <taxon>Eurotiomycetes</taxon>
        <taxon>Eurotiomycetidae</taxon>
        <taxon>Eurotiales</taxon>
        <taxon>Aspergillaceae</taxon>
        <taxon>Aspergillus</taxon>
        <taxon>Aspergillus subgen. Fumigati</taxon>
    </lineage>
</organism>
<keyword id="KW-0002">3D-structure</keyword>
<keyword id="KW-0274">FAD</keyword>
<keyword id="KW-0285">Flavoprotein</keyword>
<keyword id="KW-0503">Monooxygenase</keyword>
<keyword id="KW-0521">NADP</keyword>
<keyword id="KW-0547">Nucleotide-binding</keyword>
<keyword id="KW-0560">Oxidoreductase</keyword>
<keyword id="KW-1185">Reference proteome</keyword>
<accession>E9QYP0</accession>
<accession>Q4X250</accession>
<accession>Q5SE95</accession>
<reference key="1">
    <citation type="journal article" date="2004" name="J. Exp. Med.">
        <title>Siderophore biosynthesis but not reductive iron assimilation is essential for Aspergillus fumigatus virulence.</title>
        <authorList>
            <person name="Schrettl M."/>
            <person name="Bignell E."/>
            <person name="Kragl C."/>
            <person name="Joechl C."/>
            <person name="Rogers T."/>
            <person name="Arst H.N. Jr."/>
            <person name="Haynes K."/>
            <person name="Haas H."/>
        </authorList>
    </citation>
    <scope>NUCLEOTIDE SEQUENCE [GENOMIC DNA]</scope>
    <scope>FUNCTION</scope>
    <scope>PATHWAY</scope>
    <scope>DISRUPTION PHENOTYPE</scope>
</reference>
<reference key="2">
    <citation type="journal article" date="2005" name="Infect. Immun.">
        <title>The Aspergillus fumigatus siderophore biosynthetic gene sidA, encoding L-ornithine N(5)-oxygenase, is required for virulence.</title>
        <authorList>
            <person name="Hissen A.H."/>
            <person name="Wan A.N."/>
            <person name="Warwas M.L."/>
            <person name="Pinto L.J."/>
            <person name="Moore M.M."/>
        </authorList>
    </citation>
    <scope>NUCLEOTIDE SEQUENCE [GENOMIC DNA]</scope>
    <scope>FUNCTION</scope>
    <scope>DISRUPTION PHENOTYPE</scope>
    <source>
        <strain>NIH 5233 / ATCC 13073</strain>
    </source>
</reference>
<reference key="3">
    <citation type="journal article" date="2005" name="Nature">
        <title>Genomic sequence of the pathogenic and allergenic filamentous fungus Aspergillus fumigatus.</title>
        <authorList>
            <person name="Nierman W.C."/>
            <person name="Pain A."/>
            <person name="Anderson M.J."/>
            <person name="Wortman J.R."/>
            <person name="Kim H.S."/>
            <person name="Arroyo J."/>
            <person name="Berriman M."/>
            <person name="Abe K."/>
            <person name="Archer D.B."/>
            <person name="Bermejo C."/>
            <person name="Bennett J.W."/>
            <person name="Bowyer P."/>
            <person name="Chen D."/>
            <person name="Collins M."/>
            <person name="Coulsen R."/>
            <person name="Davies R."/>
            <person name="Dyer P.S."/>
            <person name="Farman M.L."/>
            <person name="Fedorova N."/>
            <person name="Fedorova N.D."/>
            <person name="Feldblyum T.V."/>
            <person name="Fischer R."/>
            <person name="Fosker N."/>
            <person name="Fraser A."/>
            <person name="Garcia J.L."/>
            <person name="Garcia M.J."/>
            <person name="Goble A."/>
            <person name="Goldman G.H."/>
            <person name="Gomi K."/>
            <person name="Griffith-Jones S."/>
            <person name="Gwilliam R."/>
            <person name="Haas B.J."/>
            <person name="Haas H."/>
            <person name="Harris D.E."/>
            <person name="Horiuchi H."/>
            <person name="Huang J."/>
            <person name="Humphray S."/>
            <person name="Jimenez J."/>
            <person name="Keller N."/>
            <person name="Khouri H."/>
            <person name="Kitamoto K."/>
            <person name="Kobayashi T."/>
            <person name="Konzack S."/>
            <person name="Kulkarni R."/>
            <person name="Kumagai T."/>
            <person name="Lafton A."/>
            <person name="Latge J.-P."/>
            <person name="Li W."/>
            <person name="Lord A."/>
            <person name="Lu C."/>
            <person name="Majoros W.H."/>
            <person name="May G.S."/>
            <person name="Miller B.L."/>
            <person name="Mohamoud Y."/>
            <person name="Molina M."/>
            <person name="Monod M."/>
            <person name="Mouyna I."/>
            <person name="Mulligan S."/>
            <person name="Murphy L.D."/>
            <person name="O'Neil S."/>
            <person name="Paulsen I."/>
            <person name="Penalva M.A."/>
            <person name="Pertea M."/>
            <person name="Price C."/>
            <person name="Pritchard B.L."/>
            <person name="Quail M.A."/>
            <person name="Rabbinowitsch E."/>
            <person name="Rawlins N."/>
            <person name="Rajandream M.A."/>
            <person name="Reichard U."/>
            <person name="Renauld H."/>
            <person name="Robson G.D."/>
            <person name="Rodriguez de Cordoba S."/>
            <person name="Rodriguez-Pena J.M."/>
            <person name="Ronning C.M."/>
            <person name="Rutter S."/>
            <person name="Salzberg S.L."/>
            <person name="Sanchez M."/>
            <person name="Sanchez-Ferrero J.C."/>
            <person name="Saunders D."/>
            <person name="Seeger K."/>
            <person name="Squares R."/>
            <person name="Squares S."/>
            <person name="Takeuchi M."/>
            <person name="Tekaia F."/>
            <person name="Turner G."/>
            <person name="Vazquez de Aldana C.R."/>
            <person name="Weidman J."/>
            <person name="White O."/>
            <person name="Woodward J.R."/>
            <person name="Yu J.-H."/>
            <person name="Fraser C.M."/>
            <person name="Galagan J.E."/>
            <person name="Asai K."/>
            <person name="Machida M."/>
            <person name="Hall N."/>
            <person name="Barrell B.G."/>
            <person name="Denning D.W."/>
        </authorList>
    </citation>
    <scope>NUCLEOTIDE SEQUENCE [LARGE SCALE GENOMIC DNA]</scope>
    <source>
        <strain>ATCC MYA-4609 / CBS 101355 / FGSC A1100 / Af293</strain>
    </source>
</reference>
<reference key="4">
    <citation type="journal article" date="2007" name="PLoS Pathog.">
        <title>Distinct roles for intra- and extracellular siderophores during Aspergillus fumigatus infection.</title>
        <authorList>
            <person name="Schrettl M."/>
            <person name="Bignell E."/>
            <person name="Kragl C."/>
            <person name="Sabiha Y."/>
            <person name="Loss O."/>
            <person name="Eisendle M."/>
            <person name="Wallner A."/>
            <person name="Arst H.N. Jr."/>
            <person name="Haynes K."/>
            <person name="Haas H."/>
        </authorList>
    </citation>
    <scope>FUNCTION</scope>
    <scope>DISRUPTION PHENOTYPE</scope>
</reference>
<reference key="5">
    <citation type="journal article" date="2008" name="Mol. Microbiol.">
        <title>SreA-mediated iron regulation in Aspergillus fumigatus.</title>
        <authorList>
            <person name="Schrettl M."/>
            <person name="Kim H.S."/>
            <person name="Eisendle M."/>
            <person name="Kragl C."/>
            <person name="Nierman W.C."/>
            <person name="Heinekamp T."/>
            <person name="Werner E.R."/>
            <person name="Jacobsen I."/>
            <person name="Illmer P."/>
            <person name="Yi H."/>
            <person name="Brakhage A.A."/>
            <person name="Haas H."/>
        </authorList>
    </citation>
    <scope>INDUCTION</scope>
</reference>
<reference key="6">
    <citation type="journal article" date="2010" name="Biochemistry">
        <title>Aspergillus fumigatus SidA is a highly specific ornithine hydroxylase with bound flavin cofactor.</title>
        <authorList>
            <person name="Chocklett S.W."/>
            <person name="Sobrado P."/>
        </authorList>
    </citation>
    <scope>FUNCTION</scope>
    <scope>CATALYTIC ACTIVITY</scope>
    <scope>BIOPHYSICOCHEMICAL PROPERTIES</scope>
    <scope>COFACTOR</scope>
    <scope>PATHWAY</scope>
    <scope>SUBUNIT</scope>
    <scope>MASS SPECTROMETRY</scope>
    <source>
        <strain>ATCC MYA-4609 / CBS 101355 / FGSC A1100 / Af293</strain>
    </source>
</reference>
<reference key="7">
    <citation type="journal article" date="2010" name="J. Biol. Chem.">
        <title>Comprehensive spectroscopic, steady state, and transient kinetic studies of a representative siderophore-associated flavin monooxygenase.</title>
        <authorList>
            <person name="Mayfield J.A."/>
            <person name="Frederick R.E."/>
            <person name="Streit B.R."/>
            <person name="Wencewicz T.A."/>
            <person name="Ballou D.P."/>
            <person name="DuBois J.L."/>
        </authorList>
    </citation>
    <scope>FUNCTION</scope>
    <scope>CATALYTIC ACTIVITY</scope>
    <scope>BIOPHYSICOCHEMICAL PROPERTIES</scope>
    <scope>COFACTOR</scope>
</reference>
<reference key="8">
    <citation type="journal article" date="2011" name="Appl. Environ. Microbiol.">
        <title>SidL, an Aspergillus fumigatus transacetylase involved in biosynthesis of the siderophores ferricrocin and hydroxyferricrocin.</title>
        <authorList>
            <person name="Blatzer M."/>
            <person name="Schrettl M."/>
            <person name="Sarg B."/>
            <person name="Lindner H.H."/>
            <person name="Pfaller K."/>
            <person name="Haas H."/>
        </authorList>
    </citation>
    <scope>FUNCTION</scope>
</reference>
<reference key="9">
    <citation type="journal article" date="2012" name="Biochim. Biophys. Acta">
        <title>Dual role of NADP(H) in the reaction of a flavin dependent N-hydroxylating monooxygenase.</title>
        <authorList>
            <person name="Romero E."/>
            <person name="Fedkenheuer M."/>
            <person name="Chocklett S.W."/>
            <person name="Qi J."/>
            <person name="Oppenheimer M."/>
            <person name="Sobrado P."/>
        </authorList>
    </citation>
    <scope>FUNCTION</scope>
</reference>
<reference key="10">
    <citation type="journal article" date="2012" name="Proc. Natl. Acad. Sci. U.S.A.">
        <title>Mevalonate governs interdependency of ergosterol and siderophore biosyntheses in the fungal pathogen Aspergillus fumigatus.</title>
        <authorList>
            <person name="Yasmin S."/>
            <person name="Alcazar-Fuoli L."/>
            <person name="Gruendlinger M."/>
            <person name="Puempel T."/>
            <person name="Cairns T."/>
            <person name="Blatzer M."/>
            <person name="Lopez J.F."/>
            <person name="Grimalt J.O."/>
            <person name="Bignell E."/>
            <person name="Haas H."/>
        </authorList>
    </citation>
    <scope>FUNCTION</scope>
</reference>
<reference key="11">
    <citation type="journal article" date="2012" name="Biochemistry">
        <title>Structural insight into the mechanism of oxygen activation and substrate selectivity of flavin-dependent N-hydroxylating monooxygenases.</title>
        <authorList>
            <person name="Franceschini S."/>
            <person name="Fedkenheuer M."/>
            <person name="Vogelaar N.J."/>
            <person name="Robinson H.H."/>
            <person name="Sobrado P."/>
            <person name="Mattevi A."/>
        </authorList>
    </citation>
    <scope>X-RAY CRYSTALLOGRAPHY (1.90 ANGSTROMS) IN COMPLEX WITH FAD; NADP; L-ORNITHINE; LYSINE AND L-ARGININE</scope>
</reference>
<proteinExistence type="evidence at protein level"/>
<protein>
    <recommendedName>
        <fullName evidence="12">L-ornithine N(5)-monooxygenase</fullName>
        <shortName evidence="1">OMO</shortName>
        <ecNumber evidence="6 7">1.14.13.196</ecNumber>
    </recommendedName>
    <alternativeName>
        <fullName evidence="13">L-ornithine N(5)-oxygenase</fullName>
    </alternativeName>
    <alternativeName>
        <fullName evidence="12">Siderophore biosynthesis protein A</fullName>
    </alternativeName>
</protein>
<comment type="function">
    <text evidence="3 4 5 6 7 8 9 10">L-ornithine N(5)-monooxygenase; part of the siderophore biosynthetic pathway (PubMed:15504822, PubMed:16113265, PubMed:17845073, PubMed:20614882, PubMed:20650894, PubMed:22465572). Aspergillus fumigatus produces four types of siderophores, low-molecular-mass iron chelators, including excreted fusarinine C (FsC) and triacetylfusarinine C (TAFC) for iron uptake; and intacellular ferricrocin (FC) for hyphal and hydroxyferricrocin (HFC) for conidial iron distribution and storage. TAFC consists of three N(2)-acetyl-N(5)-anhydromevalonyl-N(5)-hydroxyornithine residues cyclically linked by ester bonds; FC is a cyclic hexapeptide with the structure Gly-Ser-Gly-(N(5)-acetyl-N(5)-hydroxyornithine)x3. The biosynthesis of all four siderophores depends on the hydroxylation of ornithine, catalyzed by the monooxygenase sidA (PubMed:15504822, PubMed:16113265, PubMed:20614882, PubMed:20650894, PubMed:22465572). SidA is highly specific for its substrate, only hydrolyzing l-ornithine, and has preference for NADPH over NADH, NADPH playing a role in stabilization of the C4a-hydroperoxyflavin intermediate (PubMed:20614882, PubMed:22465572). Subsequently, the pathways for biosynthesis of extra- and intracellular siderophores split (PubMed:17845073). For biosynthesis of extracellular siderophores, the transacylase sidF transfers anhydromevalonyl to N(5)-hydroxyornithine (PubMed:17845073). The required anhydromevalonyl-CoA moiety is derived from mevalonate by CoA ligation and dehydration catalyzed by sidI and sidH respectively (PubMed:22106303). The acetylation of N(5)-hydroxyornithine for FC biosynthesis involves the constitutively expressed sidL (PubMed:21622789). FC is hydroxylated to HFC by an as yet uncharacterized enzyme during conidiation (PubMed:17845073). Assembly of fusarinine C (FsC) and FC is catalyzed by two different nonribosomal peptide synthetases (NRPS), sidD and sidC respectively (PubMed:17845073). Subsequently, sidG catalyzes N2-acetylation of FsC for forming TAFC (PubMed:17845073). Both extra- and intracellular siderophores are crucial for growth during iron limitation and virulence (PubMed:16113265).</text>
</comment>
<comment type="catalytic activity">
    <reaction evidence="6 7">
        <text>L-ornithine + NADPH + O2 = N(5)-hydroxy-L-ornithine + NADP(+) + H2O</text>
        <dbReference type="Rhea" id="RHEA:41508"/>
        <dbReference type="ChEBI" id="CHEBI:15377"/>
        <dbReference type="ChEBI" id="CHEBI:15379"/>
        <dbReference type="ChEBI" id="CHEBI:46911"/>
        <dbReference type="ChEBI" id="CHEBI:57783"/>
        <dbReference type="ChEBI" id="CHEBI:58349"/>
        <dbReference type="ChEBI" id="CHEBI:78275"/>
        <dbReference type="EC" id="1.14.13.196"/>
    </reaction>
</comment>
<comment type="catalytic activity">
    <reaction evidence="6 7">
        <text>L-ornithine + NADH + O2 = N(5)-hydroxy-L-ornithine + NAD(+) + H2O</text>
        <dbReference type="Rhea" id="RHEA:41512"/>
        <dbReference type="ChEBI" id="CHEBI:15377"/>
        <dbReference type="ChEBI" id="CHEBI:15379"/>
        <dbReference type="ChEBI" id="CHEBI:46911"/>
        <dbReference type="ChEBI" id="CHEBI:57540"/>
        <dbReference type="ChEBI" id="CHEBI:57945"/>
        <dbReference type="ChEBI" id="CHEBI:78275"/>
        <dbReference type="EC" id="1.14.13.196"/>
    </reaction>
</comment>
<comment type="cofactor">
    <cofactor evidence="6 7 11">
        <name>FAD</name>
        <dbReference type="ChEBI" id="CHEBI:57692"/>
    </cofactor>
    <text evidence="6 7 11">Binds 1 FAD per subunit.</text>
</comment>
<comment type="biophysicochemical properties">
    <kinetics>
        <KM evidence="6">1.7 mM for L-ornithine (in the presence of 1 mM NADH)</KM>
        <KM evidence="6">1.7 mM for L-ornithine (in the presence of 1 mM NADPH)</KM>
        <KM evidence="7">0.49 mM for L-ornithine (at 37 degrees Celsius)</KM>
        <KM evidence="7">0.58 mM for L-ornithine (at 25 degrees Celsius)</KM>
        <KM evidence="6">0.94 mM for NADPH (in the presence of 15 mM L-ornithine)</KM>
        <KM evidence="6">0.9 mM for NADH (in the presence of 15 mM L-ornithine)</KM>
        <KM evidence="7">4.6 uM for NADPH (at 37 degrees Celsius)</KM>
        <KM evidence="7">2.6 uM for NADPH (at 25 degrees Celsius)</KM>
        <KM evidence="7">18 uM for O(2) (at 37 degrees Celsius)</KM>
        <KM evidence="7">16 uM for O(2) (at 25 degrees Celsius)</KM>
        <text evidence="6">kcat is 29 min(-1) with L-ornithine as substrate and 75 min(-1) with NADPH as substrate.</text>
    </kinetics>
</comment>
<comment type="pathway">
    <text evidence="3 4 5 6 7 10">Siderophore biosynthesis; ferrichrome biosynthesis.</text>
</comment>
<comment type="subunit">
    <text evidence="6">Homotetramer.</text>
</comment>
<comment type="mass spectrometry"/>
<comment type="disruption phenotype">
    <text evidence="3 4">Moderately reduced growth rate during iron starvation and in iron replete conditions. Only displays 1% of wild-type conidiospore production in iron-depleted and replete conditions. Completely attenuates virulence in a mouse model of invasive pulmonary aspergillosis.</text>
</comment>
<comment type="similarity">
    <text evidence="14">Belongs to the lysine N(6)-hydroxylase/L-ornithine N(5)-oxygenase family.</text>
</comment>
<name>SIDA_ASPFU</name>
<dbReference type="EC" id="1.14.13.196" evidence="6 7"/>
<dbReference type="EMBL" id="AY586511">
    <property type="protein sequence ID" value="AAT84594.1"/>
    <property type="molecule type" value="Genomic_DNA"/>
</dbReference>
<dbReference type="EMBL" id="AY819708">
    <property type="protein sequence ID" value="AAX40989.1"/>
    <property type="molecule type" value="Genomic_DNA"/>
</dbReference>
<dbReference type="EMBL" id="AAHF01000001">
    <property type="protein sequence ID" value="EAL93065.1"/>
    <property type="molecule type" value="Genomic_DNA"/>
</dbReference>
<dbReference type="RefSeq" id="XP_755103.1">
    <property type="nucleotide sequence ID" value="XM_750010.1"/>
</dbReference>
<dbReference type="PDB" id="4B63">
    <property type="method" value="X-ray"/>
    <property type="resolution" value="1.90 A"/>
    <property type="chains" value="A=1-501"/>
</dbReference>
<dbReference type="PDB" id="4B64">
    <property type="method" value="X-ray"/>
    <property type="resolution" value="2.28 A"/>
    <property type="chains" value="A=1-501"/>
</dbReference>
<dbReference type="PDB" id="4B65">
    <property type="method" value="X-ray"/>
    <property type="resolution" value="2.32 A"/>
    <property type="chains" value="A=1-501"/>
</dbReference>
<dbReference type="PDB" id="4B66">
    <property type="method" value="X-ray"/>
    <property type="resolution" value="2.90 A"/>
    <property type="chains" value="A=1-501"/>
</dbReference>
<dbReference type="PDB" id="4B67">
    <property type="method" value="X-ray"/>
    <property type="resolution" value="2.75 A"/>
    <property type="chains" value="A=1-501"/>
</dbReference>
<dbReference type="PDB" id="4B68">
    <property type="method" value="X-ray"/>
    <property type="resolution" value="2.29 A"/>
    <property type="chains" value="A=1-501"/>
</dbReference>
<dbReference type="PDB" id="4B69">
    <property type="method" value="X-ray"/>
    <property type="resolution" value="2.30 A"/>
    <property type="chains" value="A=1-501"/>
</dbReference>
<dbReference type="PDB" id="4NZH">
    <property type="method" value="X-ray"/>
    <property type="resolution" value="2.00 A"/>
    <property type="chains" value="A=1-501"/>
</dbReference>
<dbReference type="PDB" id="5CKU">
    <property type="method" value="X-ray"/>
    <property type="resolution" value="2.10 A"/>
    <property type="chains" value="A=1-501"/>
</dbReference>
<dbReference type="PDB" id="6X0H">
    <property type="method" value="X-ray"/>
    <property type="resolution" value="2.09 A"/>
    <property type="chains" value="A/B/C/D=29-501"/>
</dbReference>
<dbReference type="PDB" id="6X0I">
    <property type="method" value="X-ray"/>
    <property type="resolution" value="1.95 A"/>
    <property type="chains" value="A/B/C/D=1-501"/>
</dbReference>
<dbReference type="PDB" id="6X0J">
    <property type="method" value="X-ray"/>
    <property type="resolution" value="2.33 A"/>
    <property type="chains" value="A/B/C/D=29-501"/>
</dbReference>
<dbReference type="PDB" id="6X0K">
    <property type="method" value="X-ray"/>
    <property type="resolution" value="2.23 A"/>
    <property type="chains" value="A/B/C/D/E/F/G/H=29-501"/>
</dbReference>
<dbReference type="PDB" id="7JVK">
    <property type="method" value="X-ray"/>
    <property type="resolution" value="2.20 A"/>
    <property type="chains" value="A/B/C/D=1-501"/>
</dbReference>
<dbReference type="PDB" id="7JVL">
    <property type="method" value="X-ray"/>
    <property type="resolution" value="2.10 A"/>
    <property type="chains" value="A/B/C/D=1-501"/>
</dbReference>
<dbReference type="PDBsum" id="4B63"/>
<dbReference type="PDBsum" id="4B64"/>
<dbReference type="PDBsum" id="4B65"/>
<dbReference type="PDBsum" id="4B66"/>
<dbReference type="PDBsum" id="4B67"/>
<dbReference type="PDBsum" id="4B68"/>
<dbReference type="PDBsum" id="4B69"/>
<dbReference type="PDBsum" id="4NZH"/>
<dbReference type="PDBsum" id="5CKU"/>
<dbReference type="PDBsum" id="6X0H"/>
<dbReference type="PDBsum" id="6X0I"/>
<dbReference type="PDBsum" id="6X0J"/>
<dbReference type="PDBsum" id="6X0K"/>
<dbReference type="PDBsum" id="7JVK"/>
<dbReference type="PDBsum" id="7JVL"/>
<dbReference type="SMR" id="E9QYP0"/>
<dbReference type="STRING" id="330879.E9QYP0"/>
<dbReference type="BindingDB" id="E9QYP0"/>
<dbReference type="ChEMBL" id="CHEMBL4295542"/>
<dbReference type="EnsemblFungi" id="EAL93065">
    <property type="protein sequence ID" value="EAL93065"/>
    <property type="gene ID" value="AFUA_2G07680"/>
</dbReference>
<dbReference type="GeneID" id="3513640"/>
<dbReference type="KEGG" id="afm:AFUA_2G07680"/>
<dbReference type="VEuPathDB" id="FungiDB:Afu2g07680"/>
<dbReference type="eggNOG" id="KOG1399">
    <property type="taxonomic scope" value="Eukaryota"/>
</dbReference>
<dbReference type="HOGENOM" id="CLU_020931_2_0_1"/>
<dbReference type="InParanoid" id="E9QYP0"/>
<dbReference type="OMA" id="YHGNTNY"/>
<dbReference type="OrthoDB" id="3519933at2759"/>
<dbReference type="BRENDA" id="1.14.13.195">
    <property type="organism ID" value="508"/>
</dbReference>
<dbReference type="BRENDA" id="1.14.13.196">
    <property type="organism ID" value="508"/>
</dbReference>
<dbReference type="UniPathway" id="UPA00783"/>
<dbReference type="EvolutionaryTrace" id="E9QYP0"/>
<dbReference type="PHI-base" id="PHI:377"/>
<dbReference type="PHI-base" id="PHI:486"/>
<dbReference type="Proteomes" id="UP000002530">
    <property type="component" value="Chromosome 2"/>
</dbReference>
<dbReference type="GO" id="GO:0005506">
    <property type="term" value="F:iron ion binding"/>
    <property type="evidence" value="ECO:0000314"/>
    <property type="project" value="AspGD"/>
</dbReference>
<dbReference type="GO" id="GO:0004497">
    <property type="term" value="F:monooxygenase activity"/>
    <property type="evidence" value="ECO:0000314"/>
    <property type="project" value="AspGD"/>
</dbReference>
<dbReference type="GO" id="GO:0004499">
    <property type="term" value="F:N,N-dimethylaniline monooxygenase activity"/>
    <property type="evidence" value="ECO:0000314"/>
    <property type="project" value="AspGD"/>
</dbReference>
<dbReference type="GO" id="GO:0070401">
    <property type="term" value="F:NADP+ binding"/>
    <property type="evidence" value="ECO:0000314"/>
    <property type="project" value="AspGD"/>
</dbReference>
<dbReference type="GO" id="GO:0031172">
    <property type="term" value="F:ornithine N5-monooxygenase activity"/>
    <property type="evidence" value="ECO:0007669"/>
    <property type="project" value="RHEA"/>
</dbReference>
<dbReference type="GO" id="GO:0010106">
    <property type="term" value="P:cellular response to iron ion starvation"/>
    <property type="evidence" value="ECO:0000315"/>
    <property type="project" value="AspGD"/>
</dbReference>
<dbReference type="GO" id="GO:0006696">
    <property type="term" value="P:ergosterol biosynthetic process"/>
    <property type="evidence" value="ECO:0000315"/>
    <property type="project" value="AspGD"/>
</dbReference>
<dbReference type="GO" id="GO:0031169">
    <property type="term" value="P:ferrichrome biosynthetic process"/>
    <property type="evidence" value="ECO:0007669"/>
    <property type="project" value="UniProtKB-UniPathway"/>
</dbReference>
<dbReference type="GO" id="GO:0006879">
    <property type="term" value="P:intracellular iron ion homeostasis"/>
    <property type="evidence" value="ECO:0000315"/>
    <property type="project" value="AspGD"/>
</dbReference>
<dbReference type="GO" id="GO:0044550">
    <property type="term" value="P:secondary metabolite biosynthetic process"/>
    <property type="evidence" value="ECO:0000315"/>
    <property type="project" value="AspGD"/>
</dbReference>
<dbReference type="GO" id="GO:0019290">
    <property type="term" value="P:siderophore biosynthetic process"/>
    <property type="evidence" value="ECO:0000315"/>
    <property type="project" value="AspGD"/>
</dbReference>
<dbReference type="GO" id="GO:0033214">
    <property type="term" value="P:siderophore-dependent iron import into cell"/>
    <property type="evidence" value="ECO:0000315"/>
    <property type="project" value="AspGD"/>
</dbReference>
<dbReference type="FunFam" id="3.50.50.60:FF:000195">
    <property type="entry name" value="L-ornithine N(5)-monooxygenase"/>
    <property type="match status" value="1"/>
</dbReference>
<dbReference type="Gene3D" id="3.50.50.60">
    <property type="entry name" value="FAD/NAD(P)-binding domain"/>
    <property type="match status" value="1"/>
</dbReference>
<dbReference type="InterPro" id="IPR036188">
    <property type="entry name" value="FAD/NAD-bd_sf"/>
</dbReference>
<dbReference type="InterPro" id="IPR025700">
    <property type="entry name" value="Lys/Orn_oxygenase"/>
</dbReference>
<dbReference type="PANTHER" id="PTHR42802:SF1">
    <property type="entry name" value="L-ORNITHINE N(5)-MONOOXYGENASE"/>
    <property type="match status" value="1"/>
</dbReference>
<dbReference type="PANTHER" id="PTHR42802">
    <property type="entry name" value="MONOOXYGENASE"/>
    <property type="match status" value="1"/>
</dbReference>
<dbReference type="Pfam" id="PF13434">
    <property type="entry name" value="Lys_Orn_oxgnase"/>
    <property type="match status" value="1"/>
</dbReference>
<dbReference type="SUPFAM" id="SSF51905">
    <property type="entry name" value="FAD/NAD(P)-binding domain"/>
    <property type="match status" value="1"/>
</dbReference>
<evidence type="ECO:0000250" key="1">
    <source>
        <dbReference type="UniProtKB" id="G5EB76"/>
    </source>
</evidence>
<evidence type="ECO:0000256" key="2">
    <source>
        <dbReference type="SAM" id="MobiDB-lite"/>
    </source>
</evidence>
<evidence type="ECO:0000269" key="3">
    <source>
    </source>
</evidence>
<evidence type="ECO:0000269" key="4">
    <source>
    </source>
</evidence>
<evidence type="ECO:0000269" key="5">
    <source>
    </source>
</evidence>
<evidence type="ECO:0000269" key="6">
    <source>
    </source>
</evidence>
<evidence type="ECO:0000269" key="7">
    <source>
    </source>
</evidence>
<evidence type="ECO:0000269" key="8">
    <source>
    </source>
</evidence>
<evidence type="ECO:0000269" key="9">
    <source>
    </source>
</evidence>
<evidence type="ECO:0000269" key="10">
    <source>
    </source>
</evidence>
<evidence type="ECO:0000269" key="11">
    <source>
    </source>
</evidence>
<evidence type="ECO:0000303" key="12">
    <source>
    </source>
</evidence>
<evidence type="ECO:0000303" key="13">
    <source>
    </source>
</evidence>
<evidence type="ECO:0000305" key="14"/>
<evidence type="ECO:0007829" key="15">
    <source>
        <dbReference type="PDB" id="4B63"/>
    </source>
</evidence>
<evidence type="ECO:0007829" key="16">
    <source>
        <dbReference type="PDB" id="4B67"/>
    </source>
</evidence>
<evidence type="ECO:0007829" key="17">
    <source>
        <dbReference type="PDB" id="4NZH"/>
    </source>
</evidence>
<evidence type="ECO:0007829" key="18">
    <source>
        <dbReference type="PDB" id="6X0H"/>
    </source>
</evidence>